<gene>
    <name evidence="1" type="primary">kdpC</name>
    <name type="ordered locus">Avi_6072</name>
</gene>
<accession>B9K2I1</accession>
<dbReference type="EMBL" id="CP000634">
    <property type="protein sequence ID" value="ACM39079.1"/>
    <property type="molecule type" value="Genomic_DNA"/>
</dbReference>
<dbReference type="RefSeq" id="WP_012654321.1">
    <property type="nucleotide sequence ID" value="NC_011988.1"/>
</dbReference>
<dbReference type="SMR" id="B9K2I1"/>
<dbReference type="STRING" id="311402.Avi_6072"/>
<dbReference type="KEGG" id="avi:Avi_6072"/>
<dbReference type="eggNOG" id="COG2156">
    <property type="taxonomic scope" value="Bacteria"/>
</dbReference>
<dbReference type="HOGENOM" id="CLU_077094_2_0_5"/>
<dbReference type="Proteomes" id="UP000001596">
    <property type="component" value="Chromosome 2"/>
</dbReference>
<dbReference type="GO" id="GO:0005886">
    <property type="term" value="C:plasma membrane"/>
    <property type="evidence" value="ECO:0007669"/>
    <property type="project" value="UniProtKB-SubCell"/>
</dbReference>
<dbReference type="GO" id="GO:0005524">
    <property type="term" value="F:ATP binding"/>
    <property type="evidence" value="ECO:0007669"/>
    <property type="project" value="UniProtKB-UniRule"/>
</dbReference>
<dbReference type="GO" id="GO:0008556">
    <property type="term" value="F:P-type potassium transmembrane transporter activity"/>
    <property type="evidence" value="ECO:0007669"/>
    <property type="project" value="InterPro"/>
</dbReference>
<dbReference type="HAMAP" id="MF_00276">
    <property type="entry name" value="KdpC"/>
    <property type="match status" value="1"/>
</dbReference>
<dbReference type="InterPro" id="IPR003820">
    <property type="entry name" value="KdpC"/>
</dbReference>
<dbReference type="NCBIfam" id="TIGR00681">
    <property type="entry name" value="kdpC"/>
    <property type="match status" value="1"/>
</dbReference>
<dbReference type="NCBIfam" id="NF001454">
    <property type="entry name" value="PRK00315.1"/>
    <property type="match status" value="1"/>
</dbReference>
<dbReference type="PANTHER" id="PTHR30042">
    <property type="entry name" value="POTASSIUM-TRANSPORTING ATPASE C CHAIN"/>
    <property type="match status" value="1"/>
</dbReference>
<dbReference type="PANTHER" id="PTHR30042:SF2">
    <property type="entry name" value="POTASSIUM-TRANSPORTING ATPASE KDPC SUBUNIT"/>
    <property type="match status" value="1"/>
</dbReference>
<dbReference type="Pfam" id="PF02669">
    <property type="entry name" value="KdpC"/>
    <property type="match status" value="1"/>
</dbReference>
<dbReference type="PIRSF" id="PIRSF001296">
    <property type="entry name" value="K_ATPase_KdpC"/>
    <property type="match status" value="1"/>
</dbReference>
<name>KDPC_ALLAM</name>
<protein>
    <recommendedName>
        <fullName evidence="1">Potassium-transporting ATPase KdpC subunit</fullName>
    </recommendedName>
    <alternativeName>
        <fullName evidence="1">ATP phosphohydrolase [potassium-transporting] C chain</fullName>
    </alternativeName>
    <alternativeName>
        <fullName evidence="1">Potassium-binding and translocating subunit C</fullName>
    </alternativeName>
    <alternativeName>
        <fullName evidence="1">Potassium-translocating ATPase C chain</fullName>
    </alternativeName>
</protein>
<evidence type="ECO:0000255" key="1">
    <source>
        <dbReference type="HAMAP-Rule" id="MF_00276"/>
    </source>
</evidence>
<evidence type="ECO:0000256" key="2">
    <source>
        <dbReference type="SAM" id="MobiDB-lite"/>
    </source>
</evidence>
<proteinExistence type="inferred from homology"/>
<feature type="chain" id="PRO_1000132509" description="Potassium-transporting ATPase KdpC subunit">
    <location>
        <begin position="1"/>
        <end position="191"/>
    </location>
</feature>
<feature type="transmembrane region" description="Helical" evidence="1">
    <location>
        <begin position="13"/>
        <end position="35"/>
    </location>
</feature>
<feature type="region of interest" description="Disordered" evidence="2">
    <location>
        <begin position="112"/>
        <end position="132"/>
    </location>
</feature>
<organism>
    <name type="scientific">Allorhizobium ampelinum (strain ATCC BAA-846 / DSM 112012 / S4)</name>
    <name type="common">Agrobacterium vitis (strain S4)</name>
    <dbReference type="NCBI Taxonomy" id="311402"/>
    <lineage>
        <taxon>Bacteria</taxon>
        <taxon>Pseudomonadati</taxon>
        <taxon>Pseudomonadota</taxon>
        <taxon>Alphaproteobacteria</taxon>
        <taxon>Hyphomicrobiales</taxon>
        <taxon>Rhizobiaceae</taxon>
        <taxon>Rhizobium/Agrobacterium group</taxon>
        <taxon>Allorhizobium</taxon>
        <taxon>Allorhizobium ampelinum</taxon>
    </lineage>
</organism>
<sequence length="191" mass="19470">MLSHLRPAITMTVLFTGLCGLAYPLAITGVAQAVLPAQANGSIVTKGDAVVGSALIGQAFTSPRYFASRPSATSNSPYNPLASGGTNLGATSQKLKDQIAAAVTAWQANGRSGPVPADAVTSSASGLDPDISPENARQQVALVAKARNMPEKDVAALVEAQVQPRLLGVIGEPRVNVLRLNMALDAAGATQ</sequence>
<keyword id="KW-0067">ATP-binding</keyword>
<keyword id="KW-0997">Cell inner membrane</keyword>
<keyword id="KW-1003">Cell membrane</keyword>
<keyword id="KW-0406">Ion transport</keyword>
<keyword id="KW-0472">Membrane</keyword>
<keyword id="KW-0547">Nucleotide-binding</keyword>
<keyword id="KW-0630">Potassium</keyword>
<keyword id="KW-0633">Potassium transport</keyword>
<keyword id="KW-1185">Reference proteome</keyword>
<keyword id="KW-0812">Transmembrane</keyword>
<keyword id="KW-1133">Transmembrane helix</keyword>
<keyword id="KW-0813">Transport</keyword>
<reference key="1">
    <citation type="journal article" date="2009" name="J. Bacteriol.">
        <title>Genome sequences of three Agrobacterium biovars help elucidate the evolution of multichromosome genomes in bacteria.</title>
        <authorList>
            <person name="Slater S.C."/>
            <person name="Goldman B.S."/>
            <person name="Goodner B."/>
            <person name="Setubal J.C."/>
            <person name="Farrand S.K."/>
            <person name="Nester E.W."/>
            <person name="Burr T.J."/>
            <person name="Banta L."/>
            <person name="Dickerman A.W."/>
            <person name="Paulsen I."/>
            <person name="Otten L."/>
            <person name="Suen G."/>
            <person name="Welch R."/>
            <person name="Almeida N.F."/>
            <person name="Arnold F."/>
            <person name="Burton O.T."/>
            <person name="Du Z."/>
            <person name="Ewing A."/>
            <person name="Godsy E."/>
            <person name="Heisel S."/>
            <person name="Houmiel K.L."/>
            <person name="Jhaveri J."/>
            <person name="Lu J."/>
            <person name="Miller N.M."/>
            <person name="Norton S."/>
            <person name="Chen Q."/>
            <person name="Phoolcharoen W."/>
            <person name="Ohlin V."/>
            <person name="Ondrusek D."/>
            <person name="Pride N."/>
            <person name="Stricklin S.L."/>
            <person name="Sun J."/>
            <person name="Wheeler C."/>
            <person name="Wilson L."/>
            <person name="Zhu H."/>
            <person name="Wood D.W."/>
        </authorList>
    </citation>
    <scope>NUCLEOTIDE SEQUENCE [LARGE SCALE GENOMIC DNA]</scope>
    <source>
        <strain>ATCC BAA-846 / DSM 112012 / S4</strain>
    </source>
</reference>
<comment type="function">
    <text evidence="1">Part of the high-affinity ATP-driven potassium transport (or Kdp) system, which catalyzes the hydrolysis of ATP coupled with the electrogenic transport of potassium into the cytoplasm. This subunit acts as a catalytic chaperone that increases the ATP-binding affinity of the ATP-hydrolyzing subunit KdpB by the formation of a transient KdpB/KdpC/ATP ternary complex.</text>
</comment>
<comment type="subunit">
    <text evidence="1">The system is composed of three essential subunits: KdpA, KdpB and KdpC.</text>
</comment>
<comment type="subcellular location">
    <subcellularLocation>
        <location evidence="1">Cell inner membrane</location>
        <topology evidence="1">Single-pass membrane protein</topology>
    </subcellularLocation>
</comment>
<comment type="similarity">
    <text evidence="1">Belongs to the KdpC family.</text>
</comment>